<organism>
    <name type="scientific">Homo sapiens</name>
    <name type="common">Human</name>
    <dbReference type="NCBI Taxonomy" id="9606"/>
    <lineage>
        <taxon>Eukaryota</taxon>
        <taxon>Metazoa</taxon>
        <taxon>Chordata</taxon>
        <taxon>Craniata</taxon>
        <taxon>Vertebrata</taxon>
        <taxon>Euteleostomi</taxon>
        <taxon>Mammalia</taxon>
        <taxon>Eutheria</taxon>
        <taxon>Euarchontoglires</taxon>
        <taxon>Primates</taxon>
        <taxon>Haplorrhini</taxon>
        <taxon>Catarrhini</taxon>
        <taxon>Hominidae</taxon>
        <taxon>Homo</taxon>
    </lineage>
</organism>
<accession>Q9UN19</accession>
<accession>Q8TCK5</accession>
<accession>Q9UHF2</accession>
<sequence>MGRAELLEGKMSTQDPSDLWSRSDGEAELLQDLGWYHGNLTRHAAEALLLSNGCDGSYLLRDSNETTGLYSLSVRAKDSVKHFHVEYTGYSFKFGFNEFSSLKDFVKHFANQPLIGSETGTLMVLKHPYPRKVEEPSIYESVRVHTAMQTGRTEDDLVPTAPSLGTKEGYLTKQGGLVKTWKTRWFTLHRNELKYFKDQMSPEPIRILDLTECSAVQFDYSQERVNCFCLVFPFRTFYLCAKTGVEADEWIKILRWKLSQIRKQLNQGEGTIRSRSFIFK</sequence>
<name>DAPP1_HUMAN</name>
<gene>
    <name type="primary">DAPP1</name>
    <name type="synonym">BAM32</name>
    <name type="ORF">HSPC066</name>
</gene>
<keyword id="KW-0002">3D-structure</keyword>
<keyword id="KW-0025">Alternative splicing</keyword>
<keyword id="KW-0963">Cytoplasm</keyword>
<keyword id="KW-0472">Membrane</keyword>
<keyword id="KW-0597">Phosphoprotein</keyword>
<keyword id="KW-1267">Proteomics identification</keyword>
<keyword id="KW-1185">Reference proteome</keyword>
<keyword id="KW-0727">SH2 domain</keyword>
<evidence type="ECO:0000250" key="1">
    <source>
        <dbReference type="UniProtKB" id="Q9QXT1"/>
    </source>
</evidence>
<evidence type="ECO:0000255" key="2">
    <source>
        <dbReference type="PROSITE-ProRule" id="PRU00145"/>
    </source>
</evidence>
<evidence type="ECO:0000255" key="3">
    <source>
        <dbReference type="PROSITE-ProRule" id="PRU00191"/>
    </source>
</evidence>
<evidence type="ECO:0000256" key="4">
    <source>
        <dbReference type="SAM" id="MobiDB-lite"/>
    </source>
</evidence>
<evidence type="ECO:0000269" key="5">
    <source>
    </source>
</evidence>
<evidence type="ECO:0000269" key="6">
    <source>
    </source>
</evidence>
<evidence type="ECO:0000269" key="7">
    <source>
    </source>
</evidence>
<evidence type="ECO:0000303" key="8">
    <source>
    </source>
</evidence>
<evidence type="ECO:0000305" key="9"/>
<evidence type="ECO:0007829" key="10">
    <source>
        <dbReference type="PDB" id="1FAO"/>
    </source>
</evidence>
<protein>
    <recommendedName>
        <fullName>Dual adapter for phosphotyrosine and 3-phosphotyrosine and 3-phosphoinositide</fullName>
        <shortName>hDAPP1</shortName>
    </recommendedName>
    <alternativeName>
        <fullName>B lymphocyte adapter protein Bam32</fullName>
    </alternativeName>
    <alternativeName>
        <fullName>B-cell adapter molecule of 32 kDa</fullName>
    </alternativeName>
</protein>
<reference key="1">
    <citation type="journal article" date="1999" name="Biochem. J.">
        <title>DAPP1: a dual adaptor for phosphotyrosine and 3-phosphoinositides.</title>
        <authorList>
            <person name="Dowler S."/>
            <person name="Currie R.A."/>
            <person name="Downes C.P."/>
            <person name="Alessi D.R."/>
        </authorList>
    </citation>
    <scope>NUCLEOTIDE SEQUENCE [MRNA] (ISOFORM 1)</scope>
    <scope>TISSUE SPECIFICITY</scope>
    <scope>INTERACTION WITH PTDINS(3,4,5)P3 AND PTDINS(3,4)P2</scope>
    <scope>MUTAGENESIS OF LYS-173 AND TRP-250</scope>
</reference>
<reference key="2">
    <citation type="journal article" date="2000" name="J. Exp. Med.">
        <title>A novel B lymphocyte-associated adaptor protein, Bam32, regulates antigen receptor signaling downstream of phosphatidylinositol 3-kinase.</title>
        <authorList>
            <person name="Marshall A.J."/>
            <person name="Niiro H."/>
            <person name="Lerner C.G."/>
            <person name="Yun T.J."/>
            <person name="Thomas S."/>
            <person name="Disteche C.M."/>
            <person name="Clark E.A."/>
        </authorList>
    </citation>
    <scope>NUCLEOTIDE SEQUENCE [MRNA] (ISOFORMS 1 AND 2)</scope>
    <scope>FUNCTION</scope>
    <scope>PHOSPHORYLATION</scope>
    <scope>SUBCELLULAR LOCATION</scope>
    <scope>INTERACTION WITH PLCG2</scope>
    <scope>MUTAGENESIS OF ARG-61; ARG-184 AND LYS-197</scope>
</reference>
<reference key="3">
    <citation type="submission" date="1999-08" db="EMBL/GenBank/DDBJ databases">
        <title>Molecular cloning of a protein-tyrosine phosphatase D.</title>
        <authorList>
            <person name="Zhang W."/>
            <person name="Wan T."/>
            <person name="Cao X."/>
        </authorList>
    </citation>
    <scope>NUCLEOTIDE SEQUENCE [MRNA] (ISOFORM 1)</scope>
</reference>
<reference key="4">
    <citation type="journal article" date="2000" name="Genome Res.">
        <title>Cloning and functional analysis of cDNAs with open reading frames for 300 previously undefined genes expressed in CD34+ hematopoietic stem/progenitor cells.</title>
        <authorList>
            <person name="Zhang Q.-H."/>
            <person name="Ye M."/>
            <person name="Wu X.-Y."/>
            <person name="Ren S.-X."/>
            <person name="Zhao M."/>
            <person name="Zhao C.-J."/>
            <person name="Fu G."/>
            <person name="Shen Y."/>
            <person name="Fan H.-Y."/>
            <person name="Lu G."/>
            <person name="Zhong M."/>
            <person name="Xu X.-R."/>
            <person name="Han Z.-G."/>
            <person name="Zhang J.-W."/>
            <person name="Tao J."/>
            <person name="Huang Q.-H."/>
            <person name="Zhou J."/>
            <person name="Hu G.-X."/>
            <person name="Gu J."/>
            <person name="Chen S.-J."/>
            <person name="Chen Z."/>
        </authorList>
    </citation>
    <scope>NUCLEOTIDE SEQUENCE [LARGE SCALE MRNA] (ISOFORM 1)</scope>
    <source>
        <tissue>Umbilical cord blood</tissue>
    </source>
</reference>
<reference key="5">
    <citation type="journal article" date="2004" name="Genome Res.">
        <title>The status, quality, and expansion of the NIH full-length cDNA project: the Mammalian Gene Collection (MGC).</title>
        <authorList>
            <consortium name="The MGC Project Team"/>
        </authorList>
    </citation>
    <scope>NUCLEOTIDE SEQUENCE [LARGE SCALE MRNA] (ISOFORM 1)</scope>
    <source>
        <tissue>Urinary bladder wart</tissue>
    </source>
</reference>
<reference key="6">
    <citation type="journal article" date="2007" name="BMC Genomics">
        <title>The full-ORF clone resource of the German cDNA consortium.</title>
        <authorList>
            <person name="Bechtel S."/>
            <person name="Rosenfelder H."/>
            <person name="Duda A."/>
            <person name="Schmidt C.P."/>
            <person name="Ernst U."/>
            <person name="Wellenreuther R."/>
            <person name="Mehrle A."/>
            <person name="Schuster C."/>
            <person name="Bahr A."/>
            <person name="Bloecker H."/>
            <person name="Heubner D."/>
            <person name="Hoerlein A."/>
            <person name="Michel G."/>
            <person name="Wedler H."/>
            <person name="Koehrer K."/>
            <person name="Ottenwaelder B."/>
            <person name="Poustka A."/>
            <person name="Wiemann S."/>
            <person name="Schupp I."/>
        </authorList>
    </citation>
    <scope>NUCLEOTIDE SEQUENCE [LARGE SCALE MRNA] OF 216-280 (ISOFORM 1)</scope>
    <source>
        <tissue>Lymph node</tissue>
    </source>
</reference>
<reference key="7">
    <citation type="journal article" date="2000" name="Mol. Cell">
        <title>Structural basis for discrimination of 3-phosphoinositides by pleckstrin homology domains.</title>
        <authorList>
            <person name="Ferguson K.M."/>
            <person name="Kavran J.M."/>
            <person name="Sankaran V.G."/>
            <person name="Fournier E."/>
            <person name="Isakoff S.J."/>
            <person name="Skolnik E.Y."/>
            <person name="Lemmon M.A."/>
        </authorList>
    </citation>
    <scope>X-RAY CRYSTALLOGRAPHY (1.8 ANGSTROMS) OF 162-261 IN COMPLEX WITH INOSITOL 1,3,4,5-3 TETRAKISPHOSPHATE</scope>
    <scope>X-RAY CRYSTALLOGRAPHY (2.4 ANGSTROMS) OF 157-262</scope>
</reference>
<dbReference type="EMBL" id="AF163254">
    <property type="protein sequence ID" value="AAD49697.1"/>
    <property type="molecule type" value="mRNA"/>
</dbReference>
<dbReference type="EMBL" id="AF161551">
    <property type="protein sequence ID" value="AAF29038.1"/>
    <property type="molecule type" value="mRNA"/>
</dbReference>
<dbReference type="EMBL" id="AF186022">
    <property type="protein sequence ID" value="AAF14578.1"/>
    <property type="molecule type" value="mRNA"/>
</dbReference>
<dbReference type="EMBL" id="AF178987">
    <property type="protein sequence ID" value="AAF44351.1"/>
    <property type="molecule type" value="mRNA"/>
</dbReference>
<dbReference type="EMBL" id="BC012924">
    <property type="protein sequence ID" value="AAH12924.1"/>
    <property type="molecule type" value="mRNA"/>
</dbReference>
<dbReference type="EMBL" id="AL713793">
    <property type="protein sequence ID" value="CAD28547.1"/>
    <property type="molecule type" value="mRNA"/>
</dbReference>
<dbReference type="CCDS" id="CCDS47112.1">
    <molecule id="Q9UN19-1"/>
</dbReference>
<dbReference type="RefSeq" id="NP_001293080.1">
    <property type="nucleotide sequence ID" value="NM_001306151.1"/>
</dbReference>
<dbReference type="RefSeq" id="NP_055210.2">
    <molecule id="Q9UN19-1"/>
    <property type="nucleotide sequence ID" value="NM_014395.3"/>
</dbReference>
<dbReference type="PDB" id="1FAO">
    <property type="method" value="X-ray"/>
    <property type="resolution" value="1.80 A"/>
    <property type="chains" value="A=148-273"/>
</dbReference>
<dbReference type="PDB" id="1FB8">
    <property type="method" value="X-ray"/>
    <property type="resolution" value="2.40 A"/>
    <property type="chains" value="A=148-273"/>
</dbReference>
<dbReference type="PDBsum" id="1FAO"/>
<dbReference type="PDBsum" id="1FB8"/>
<dbReference type="SMR" id="Q9UN19"/>
<dbReference type="BioGRID" id="117981">
    <property type="interactions" value="25"/>
</dbReference>
<dbReference type="FunCoup" id="Q9UN19">
    <property type="interactions" value="1235"/>
</dbReference>
<dbReference type="IntAct" id="Q9UN19">
    <property type="interactions" value="29"/>
</dbReference>
<dbReference type="MINT" id="Q9UN19"/>
<dbReference type="STRING" id="9606.ENSP00000423602"/>
<dbReference type="DrugBank" id="DB01863">
    <property type="generic name" value="Inositol 1,3,4,5-Tetrakisphosphate"/>
</dbReference>
<dbReference type="iPTMnet" id="Q9UN19"/>
<dbReference type="PhosphoSitePlus" id="Q9UN19"/>
<dbReference type="BioMuta" id="DAPP1"/>
<dbReference type="DMDM" id="51317293"/>
<dbReference type="jPOST" id="Q9UN19"/>
<dbReference type="MassIVE" id="Q9UN19"/>
<dbReference type="PaxDb" id="9606-ENSP00000423602"/>
<dbReference type="PeptideAtlas" id="Q9UN19"/>
<dbReference type="ProteomicsDB" id="85238">
    <molecule id="Q9UN19-1"/>
</dbReference>
<dbReference type="ProteomicsDB" id="85239">
    <molecule id="Q9UN19-2"/>
</dbReference>
<dbReference type="Antibodypedia" id="25934">
    <property type="antibodies" value="450 antibodies from 36 providers"/>
</dbReference>
<dbReference type="DNASU" id="27071"/>
<dbReference type="Ensembl" id="ENST00000512369.2">
    <molecule id="Q9UN19-1"/>
    <property type="protein sequence ID" value="ENSP00000423602.1"/>
    <property type="gene ID" value="ENSG00000070190.13"/>
</dbReference>
<dbReference type="GeneID" id="27071"/>
<dbReference type="KEGG" id="hsa:27071"/>
<dbReference type="MANE-Select" id="ENST00000512369.2">
    <property type="protein sequence ID" value="ENSP00000423602.1"/>
    <property type="RefSeq nucleotide sequence ID" value="NM_014395.3"/>
    <property type="RefSeq protein sequence ID" value="NP_055210.2"/>
</dbReference>
<dbReference type="UCSC" id="uc003hvf.5">
    <molecule id="Q9UN19-1"/>
    <property type="organism name" value="human"/>
</dbReference>
<dbReference type="AGR" id="HGNC:16500"/>
<dbReference type="CTD" id="27071"/>
<dbReference type="DisGeNET" id="27071"/>
<dbReference type="GeneCards" id="DAPP1"/>
<dbReference type="HGNC" id="HGNC:16500">
    <property type="gene designation" value="DAPP1"/>
</dbReference>
<dbReference type="HPA" id="ENSG00000070190">
    <property type="expression patterns" value="Tissue enhanced (esophagus, lymphoid tissue)"/>
</dbReference>
<dbReference type="MIM" id="605768">
    <property type="type" value="gene"/>
</dbReference>
<dbReference type="neXtProt" id="NX_Q9UN19"/>
<dbReference type="OpenTargets" id="ENSG00000070190"/>
<dbReference type="PharmGKB" id="PA27145"/>
<dbReference type="VEuPathDB" id="HostDB:ENSG00000070190"/>
<dbReference type="eggNOG" id="KOG0017">
    <property type="taxonomic scope" value="Eukaryota"/>
</dbReference>
<dbReference type="GeneTree" id="ENSGT00910000144274"/>
<dbReference type="HOGENOM" id="CLU_099070_0_0_1"/>
<dbReference type="InParanoid" id="Q9UN19"/>
<dbReference type="OMA" id="ALGWYHD"/>
<dbReference type="OrthoDB" id="185175at2759"/>
<dbReference type="PAN-GO" id="Q9UN19">
    <property type="GO annotations" value="0 GO annotations based on evolutionary models"/>
</dbReference>
<dbReference type="PhylomeDB" id="Q9UN19"/>
<dbReference type="TreeFam" id="TF105418"/>
<dbReference type="PathwayCommons" id="Q9UN19"/>
<dbReference type="Reactome" id="R-HSA-983695">
    <property type="pathway name" value="Antigen activates B Cell Receptor (BCR) leading to generation of second messengers"/>
</dbReference>
<dbReference type="SignaLink" id="Q9UN19"/>
<dbReference type="SIGNOR" id="Q9UN19"/>
<dbReference type="BioGRID-ORCS" id="27071">
    <property type="hits" value="5 hits in 1156 CRISPR screens"/>
</dbReference>
<dbReference type="EvolutionaryTrace" id="Q9UN19"/>
<dbReference type="GeneWiki" id="DAPP1"/>
<dbReference type="GenomeRNAi" id="27071"/>
<dbReference type="Pharos" id="Q9UN19">
    <property type="development level" value="Tbio"/>
</dbReference>
<dbReference type="PRO" id="PR:Q9UN19"/>
<dbReference type="Proteomes" id="UP000005640">
    <property type="component" value="Chromosome 4"/>
</dbReference>
<dbReference type="RNAct" id="Q9UN19">
    <property type="molecule type" value="protein"/>
</dbReference>
<dbReference type="Bgee" id="ENSG00000070190">
    <property type="expression patterns" value="Expressed in amniotic fluid and 171 other cell types or tissues"/>
</dbReference>
<dbReference type="ExpressionAtlas" id="Q9UN19">
    <property type="expression patterns" value="baseline and differential"/>
</dbReference>
<dbReference type="GO" id="GO:0005829">
    <property type="term" value="C:cytosol"/>
    <property type="evidence" value="ECO:0000304"/>
    <property type="project" value="Reactome"/>
</dbReference>
<dbReference type="GO" id="GO:0005886">
    <property type="term" value="C:plasma membrane"/>
    <property type="evidence" value="ECO:0000314"/>
    <property type="project" value="UniProtKB"/>
</dbReference>
<dbReference type="GO" id="GO:0005547">
    <property type="term" value="F:phosphatidylinositol-3,4,5-trisphosphate binding"/>
    <property type="evidence" value="ECO:0000314"/>
    <property type="project" value="UniProtKB"/>
</dbReference>
<dbReference type="GO" id="GO:0043325">
    <property type="term" value="F:phosphatidylinositol-3,4-bisphosphate binding"/>
    <property type="evidence" value="ECO:0000314"/>
    <property type="project" value="UniProtKB"/>
</dbReference>
<dbReference type="GO" id="GO:0005543">
    <property type="term" value="F:phospholipid binding"/>
    <property type="evidence" value="ECO:0000318"/>
    <property type="project" value="GO_Central"/>
</dbReference>
<dbReference type="GO" id="GO:0006470">
    <property type="term" value="P:protein dephosphorylation"/>
    <property type="evidence" value="ECO:0000303"/>
    <property type="project" value="UniProtKB"/>
</dbReference>
<dbReference type="GO" id="GO:0007165">
    <property type="term" value="P:signal transduction"/>
    <property type="evidence" value="ECO:0000304"/>
    <property type="project" value="ProtInc"/>
</dbReference>
<dbReference type="CDD" id="cd10573">
    <property type="entry name" value="PH_DAPP1"/>
    <property type="match status" value="1"/>
</dbReference>
<dbReference type="CDD" id="cd10355">
    <property type="entry name" value="SH2_DAPP1_BAM32_like"/>
    <property type="match status" value="1"/>
</dbReference>
<dbReference type="FunFam" id="2.30.29.30:FF:000229">
    <property type="entry name" value="Dual adapter for phosphotyrosine and 3-phosphotyrosine and 3-phosphoinositide"/>
    <property type="match status" value="1"/>
</dbReference>
<dbReference type="FunFam" id="3.30.505.10:FF:000053">
    <property type="entry name" value="Dual adapter for phosphotyrosine and 3-phosphotyrosine and 3-phosphoinositide"/>
    <property type="match status" value="1"/>
</dbReference>
<dbReference type="Gene3D" id="2.30.29.30">
    <property type="entry name" value="Pleckstrin-homology domain (PH domain)/Phosphotyrosine-binding domain (PTB)"/>
    <property type="match status" value="1"/>
</dbReference>
<dbReference type="Gene3D" id="3.30.505.10">
    <property type="entry name" value="SH2 domain"/>
    <property type="match status" value="1"/>
</dbReference>
<dbReference type="InterPro" id="IPR035843">
    <property type="entry name" value="DAPP1_SH2"/>
</dbReference>
<dbReference type="InterPro" id="IPR011993">
    <property type="entry name" value="PH-like_dom_sf"/>
</dbReference>
<dbReference type="InterPro" id="IPR001849">
    <property type="entry name" value="PH_domain"/>
</dbReference>
<dbReference type="InterPro" id="IPR051707">
    <property type="entry name" value="PI-Interact_SigTrans_Reg"/>
</dbReference>
<dbReference type="InterPro" id="IPR000980">
    <property type="entry name" value="SH2"/>
</dbReference>
<dbReference type="InterPro" id="IPR036860">
    <property type="entry name" value="SH2_dom_sf"/>
</dbReference>
<dbReference type="PANTHER" id="PTHR14336:SF15">
    <property type="entry name" value="DUAL ADAPTER FOR PHOSPHOTYROSINE AND 3-PHOSPHOTYROSINE AND 3-PHOSPHOINOSITIDE"/>
    <property type="match status" value="1"/>
</dbReference>
<dbReference type="PANTHER" id="PTHR14336">
    <property type="entry name" value="TANDEM PH DOMAIN CONTAINING PROTEIN"/>
    <property type="match status" value="1"/>
</dbReference>
<dbReference type="Pfam" id="PF00169">
    <property type="entry name" value="PH"/>
    <property type="match status" value="1"/>
</dbReference>
<dbReference type="Pfam" id="PF00017">
    <property type="entry name" value="SH2"/>
    <property type="match status" value="1"/>
</dbReference>
<dbReference type="PRINTS" id="PR00401">
    <property type="entry name" value="SH2DOMAIN"/>
</dbReference>
<dbReference type="SMART" id="SM00233">
    <property type="entry name" value="PH"/>
    <property type="match status" value="1"/>
</dbReference>
<dbReference type="SMART" id="SM00252">
    <property type="entry name" value="SH2"/>
    <property type="match status" value="1"/>
</dbReference>
<dbReference type="SUPFAM" id="SSF50729">
    <property type="entry name" value="PH domain-like"/>
    <property type="match status" value="1"/>
</dbReference>
<dbReference type="SUPFAM" id="SSF55550">
    <property type="entry name" value="SH2 domain"/>
    <property type="match status" value="1"/>
</dbReference>
<dbReference type="PROSITE" id="PS50003">
    <property type="entry name" value="PH_DOMAIN"/>
    <property type="match status" value="1"/>
</dbReference>
<dbReference type="PROSITE" id="PS50001">
    <property type="entry name" value="SH2"/>
    <property type="match status" value="1"/>
</dbReference>
<comment type="function">
    <text evidence="6">May act as a B-cell-associated adapter that regulates B-cell antigen receptor (BCR)-signaling downstream of PI3K.</text>
</comment>
<comment type="subunit">
    <text evidence="5 6 7">Interacts with PtdIns(3,4,5)P3 and PLCG2. In vitro, interacts with PtdIns(3,4)P2.</text>
</comment>
<comment type="interaction">
    <interactant intactId="EBI-3918199">
        <id>Q9UN19</id>
    </interactant>
    <interactant intactId="EBI-286427">
        <id>O95704</id>
        <label>APBB3</label>
    </interactant>
    <organismsDiffer>false</organismsDiffer>
    <experiments>2</experiments>
</comment>
<comment type="interaction">
    <interactant intactId="EBI-3918199">
        <id>Q9UN19</id>
    </interactant>
    <interactant intactId="EBI-12039347">
        <id>Q9NVQ4-2</id>
        <label>FAIM</label>
    </interactant>
    <organismsDiffer>false</organismsDiffer>
    <experiments>3</experiments>
</comment>
<comment type="interaction">
    <interactant intactId="EBI-3918199">
        <id>Q9UN19</id>
    </interactant>
    <interactant intactId="EBI-949340">
        <id>Q16595</id>
        <label>FXN</label>
    </interactant>
    <organismsDiffer>false</organismsDiffer>
    <experiments>6</experiments>
</comment>
<comment type="interaction">
    <interactant intactId="EBI-3918199">
        <id>Q9UN19</id>
    </interactant>
    <interactant intactId="EBI-466029">
        <id>P42858</id>
        <label>HTT</label>
    </interactant>
    <organismsDiffer>false</organismsDiffer>
    <experiments>9</experiments>
</comment>
<comment type="interaction">
    <interactant intactId="EBI-3918199">
        <id>Q9UN19</id>
    </interactant>
    <interactant intactId="EBI-725647">
        <id>Q99732</id>
        <label>LITAF</label>
    </interactant>
    <organismsDiffer>false</organismsDiffer>
    <experiments>3</experiments>
</comment>
<comment type="interaction">
    <interactant intactId="EBI-3918199">
        <id>Q9UN19</id>
    </interactant>
    <interactant intactId="EBI-2511486">
        <id>Q8TBZ3</id>
        <label>WDR20</label>
    </interactant>
    <organismsDiffer>false</organismsDiffer>
    <experiments>3</experiments>
</comment>
<comment type="subcellular location">
    <subcellularLocation>
        <location evidence="6">Cytoplasm</location>
    </subcellularLocation>
    <subcellularLocation>
        <location evidence="6">Membrane</location>
        <topology evidence="6">Peripheral membrane protein</topology>
    </subcellularLocation>
    <text>Membrane-associated after cell stimulation leading to its translocation.</text>
</comment>
<comment type="alternative products">
    <event type="alternative splicing"/>
    <isoform>
        <id>Q9UN19-1</id>
        <name>1</name>
        <name>hBam1</name>
        <sequence type="displayed"/>
    </isoform>
    <isoform>
        <id>Q9UN19-2</id>
        <name>2</name>
        <name>hBam2</name>
        <sequence type="described" ref="VSP_010699"/>
    </isoform>
</comment>
<comment type="tissue specificity">
    <text evidence="5">Highly expressed in placenta and lung, followed by brain, heart, kidney, liver, pancreas and skeletal muscle. Expressed by B-lymphocytes, but not T-lymphocytes or nonhematopoietic cells.</text>
</comment>
<comment type="induction">
    <text>Upon B-cell activation.</text>
</comment>
<comment type="PTM">
    <text evidence="6">Phosphorylated on tyrosine residues.</text>
</comment>
<feature type="chain" id="PRO_0000079785" description="Dual adapter for phosphotyrosine and 3-phosphotyrosine and 3-phosphoinositide">
    <location>
        <begin position="1"/>
        <end position="280"/>
    </location>
</feature>
<feature type="domain" description="SH2" evidence="3">
    <location>
        <begin position="35"/>
        <end position="129"/>
    </location>
</feature>
<feature type="domain" description="PH" evidence="2">
    <location>
        <begin position="164"/>
        <end position="259"/>
    </location>
</feature>
<feature type="region of interest" description="Disordered" evidence="4">
    <location>
        <begin position="1"/>
        <end position="20"/>
    </location>
</feature>
<feature type="modified residue" description="Phosphotyrosine" evidence="1">
    <location>
        <position position="139"/>
    </location>
</feature>
<feature type="modified residue" description="Phosphoserine" evidence="1">
    <location>
        <position position="141"/>
    </location>
</feature>
<feature type="splice variant" id="VSP_010699" description="In isoform 2." evidence="8">
    <original>SQIRKQLNQGEGTIRSRSFIFK</original>
    <variation>VKDKSCILSALCISPEEKTDHK</variation>
    <location>
        <begin position="259"/>
        <end position="280"/>
    </location>
</feature>
<feature type="mutagenesis site" description="No change in BCR-induced NFAT activation." evidence="6">
    <original>R</original>
    <variation>K</variation>
    <location>
        <position position="61"/>
    </location>
</feature>
<feature type="mutagenesis site" description="No interaction with 3-phosphoinositides." evidence="5">
    <original>K</original>
    <variation>L</variation>
    <location>
        <position position="173"/>
    </location>
</feature>
<feature type="mutagenesis site" description="No membrane association." evidence="6">
    <original>R</original>
    <variation>C</variation>
    <location>
        <position position="184"/>
    </location>
</feature>
<feature type="mutagenesis site" description="No membrane association." evidence="6">
    <original>K</original>
    <variation>E</variation>
    <location>
        <position position="197"/>
    </location>
</feature>
<feature type="mutagenesis site" description="No interaction with 3-phosphoinositides." evidence="5">
    <original>W</original>
    <variation>L</variation>
    <location>
        <position position="250"/>
    </location>
</feature>
<feature type="sequence conflict" description="In Ref. 6." evidence="9" ref="6">
    <original>VQFDYSQERVNCFC</original>
    <variation>MICNILCSFFCPIS</variation>
    <location>
        <begin position="216"/>
        <end position="229"/>
    </location>
</feature>
<feature type="strand" evidence="10">
    <location>
        <begin position="167"/>
        <end position="174"/>
    </location>
</feature>
<feature type="strand" evidence="10">
    <location>
        <begin position="176"/>
        <end position="178"/>
    </location>
</feature>
<feature type="strand" evidence="10">
    <location>
        <begin position="181"/>
        <end position="189"/>
    </location>
</feature>
<feature type="strand" evidence="10">
    <location>
        <begin position="192"/>
        <end position="198"/>
    </location>
</feature>
<feature type="strand" evidence="10">
    <location>
        <begin position="205"/>
        <end position="209"/>
    </location>
</feature>
<feature type="helix" evidence="10">
    <location>
        <begin position="210"/>
        <end position="212"/>
    </location>
</feature>
<feature type="strand" evidence="10">
    <location>
        <begin position="215"/>
        <end position="219"/>
    </location>
</feature>
<feature type="strand" evidence="10">
    <location>
        <begin position="221"/>
        <end position="232"/>
    </location>
</feature>
<feature type="strand" evidence="10">
    <location>
        <begin position="235"/>
        <end position="240"/>
    </location>
</feature>
<feature type="helix" evidence="10">
    <location>
        <begin position="244"/>
        <end position="259"/>
    </location>
</feature>
<proteinExistence type="evidence at protein level"/>